<feature type="chain" id="PRO_0000193791" description="AP-2 complex subunit mu">
    <location>
        <begin position="1"/>
        <end position="441"/>
    </location>
</feature>
<feature type="domain" description="MHD" evidence="3">
    <location>
        <begin position="174"/>
        <end position="440"/>
    </location>
</feature>
<feature type="splice variant" id="VSP_008037" description="In isoform b." evidence="7">
    <location>
        <begin position="142"/>
        <end position="147"/>
    </location>
</feature>
<feature type="sequence conflict" description="In Ref. 1; AAA27981." evidence="7" ref="1">
    <original>E</original>
    <variation>A</variation>
    <location>
        <position position="80"/>
    </location>
</feature>
<name>AP2M_CAEEL</name>
<gene>
    <name type="primary">dpy-23</name>
    <name type="synonym">ap50</name>
    <name type="ORF">R160.1</name>
</gene>
<sequence>MIGGLFVYNHKGEVLISRIYRDDVTRNAVDAFRVNVIHARQQVRSPVTNMARTSFFHVKRGNVWICAVTRQNVNAAMVFEFLKRFADTMQSYFGKLNEENVKNNFVLIYELLDEILDFGYPQNTDPGVLKTFITQQGVRTADAPVPVTKEEQSQITSQVTGQIGWRREGIKYRRNELFLDVIEYVNLLMNQQGQVLSAHVAGKVAMKSYLSGMPECKFGINDKITIEGKSKPGSDDPNKASRAAVAIDDCQFHQCVKLTKFETEHAISFIPPDGEYELMRYRTTKDIQLPFRVIPLVREVSRNKMEVKVVVKSNFKPSLLAQKLEVRIPTPPNTSGVQLICMKGKAKYKAGENAIVWKIKRMAGMKESQISAEIDLLSTGNVEKKKWNRPPVSMNFEVPFAPSGLKVRYLKVFEPKLNYSDHDVIKWVRYIGRSGLYETRC</sequence>
<dbReference type="EMBL" id="L26290">
    <property type="protein sequence ID" value="AAA27981.1"/>
    <property type="molecule type" value="mRNA"/>
</dbReference>
<dbReference type="EMBL" id="FO081006">
    <property type="protein sequence ID" value="CCD68418.1"/>
    <property type="molecule type" value="Genomic_DNA"/>
</dbReference>
<dbReference type="EMBL" id="FO081006">
    <property type="protein sequence ID" value="CCD68419.1"/>
    <property type="molecule type" value="Genomic_DNA"/>
</dbReference>
<dbReference type="PIR" id="B49837">
    <property type="entry name" value="B49837"/>
</dbReference>
<dbReference type="RefSeq" id="NP_001024865.1">
    <molecule id="P35603-2"/>
    <property type="nucleotide sequence ID" value="NM_001029694.7"/>
</dbReference>
<dbReference type="RefSeq" id="NP_741770.1">
    <molecule id="P35603-1"/>
    <property type="nucleotide sequence ID" value="NM_171670.7"/>
</dbReference>
<dbReference type="SMR" id="P35603"/>
<dbReference type="BioGRID" id="45648">
    <property type="interactions" value="17"/>
</dbReference>
<dbReference type="FunCoup" id="P35603">
    <property type="interactions" value="2539"/>
</dbReference>
<dbReference type="STRING" id="6239.R160.1a.1"/>
<dbReference type="PaxDb" id="6239-R160.1a"/>
<dbReference type="PeptideAtlas" id="P35603"/>
<dbReference type="EnsemblMetazoa" id="R160.1a.1">
    <molecule id="P35603-1"/>
    <property type="protein sequence ID" value="R160.1a.1"/>
    <property type="gene ID" value="WBGene00001082"/>
</dbReference>
<dbReference type="EnsemblMetazoa" id="R160.1b.1">
    <molecule id="P35603-2"/>
    <property type="protein sequence ID" value="R160.1b.1"/>
    <property type="gene ID" value="WBGene00001082"/>
</dbReference>
<dbReference type="GeneID" id="180713"/>
<dbReference type="KEGG" id="cel:CELE_R160.1"/>
<dbReference type="UCSC" id="R160.1b">
    <molecule id="P35603-1"/>
    <property type="organism name" value="c. elegans"/>
</dbReference>
<dbReference type="AGR" id="WB:WBGene00001082"/>
<dbReference type="CTD" id="180713"/>
<dbReference type="WormBase" id="R160.1a">
    <molecule id="P35603-1"/>
    <property type="protein sequence ID" value="CE33813"/>
    <property type="gene ID" value="WBGene00001082"/>
    <property type="gene designation" value="dpy-23"/>
</dbReference>
<dbReference type="WormBase" id="R160.1b">
    <molecule id="P35603-2"/>
    <property type="protein sequence ID" value="CE33814"/>
    <property type="gene ID" value="WBGene00001082"/>
    <property type="gene designation" value="dpy-23"/>
</dbReference>
<dbReference type="eggNOG" id="KOG0938">
    <property type="taxonomic scope" value="Eukaryota"/>
</dbReference>
<dbReference type="GeneTree" id="ENSGT00940000165747"/>
<dbReference type="InParanoid" id="P35603"/>
<dbReference type="OMA" id="VWKIPRI"/>
<dbReference type="OrthoDB" id="10259133at2759"/>
<dbReference type="PhylomeDB" id="P35603"/>
<dbReference type="Reactome" id="R-CEL-190873">
    <property type="pathway name" value="Gap junction degradation"/>
</dbReference>
<dbReference type="Reactome" id="R-CEL-196025">
    <property type="pathway name" value="Formation of annular gap junctions"/>
</dbReference>
<dbReference type="Reactome" id="R-CEL-3928665">
    <property type="pathway name" value="EPH-ephrin mediated repulsion of cells"/>
</dbReference>
<dbReference type="Reactome" id="R-CEL-437239">
    <property type="pathway name" value="Recycling pathway of L1"/>
</dbReference>
<dbReference type="Reactome" id="R-CEL-5099900">
    <property type="pathway name" value="WNT5A-dependent internalization of FZD4"/>
</dbReference>
<dbReference type="Reactome" id="R-CEL-5140745">
    <property type="pathway name" value="WNT5A-dependent internalization of FZD2, FZD5 and ROR2"/>
</dbReference>
<dbReference type="Reactome" id="R-CEL-8856825">
    <property type="pathway name" value="Cargo recognition for clathrin-mediated endocytosis"/>
</dbReference>
<dbReference type="Reactome" id="R-CEL-8856828">
    <property type="pathway name" value="Clathrin-mediated endocytosis"/>
</dbReference>
<dbReference type="Reactome" id="R-CEL-8866427">
    <property type="pathway name" value="VLDLR internalisation and degradation"/>
</dbReference>
<dbReference type="Reactome" id="R-CEL-8964038">
    <property type="pathway name" value="LDL clearance"/>
</dbReference>
<dbReference type="SignaLink" id="P35603"/>
<dbReference type="PRO" id="PR:P35603"/>
<dbReference type="Proteomes" id="UP000001940">
    <property type="component" value="Chromosome X"/>
</dbReference>
<dbReference type="Bgee" id="WBGene00001082">
    <property type="expression patterns" value="Expressed in pharyngeal muscle cell (C elegans) and 4 other cell types or tissues"/>
</dbReference>
<dbReference type="GO" id="GO:0030122">
    <property type="term" value="C:AP-2 adaptor complex"/>
    <property type="evidence" value="ECO:0000318"/>
    <property type="project" value="GO_Central"/>
</dbReference>
<dbReference type="GO" id="GO:0031410">
    <property type="term" value="C:cytoplasmic vesicle"/>
    <property type="evidence" value="ECO:0000318"/>
    <property type="project" value="GO_Central"/>
</dbReference>
<dbReference type="GO" id="GO:1990075">
    <property type="term" value="C:periciliary membrane compartment"/>
    <property type="evidence" value="ECO:0000314"/>
    <property type="project" value="WormBase"/>
</dbReference>
<dbReference type="GO" id="GO:0045202">
    <property type="term" value="C:synapse"/>
    <property type="evidence" value="ECO:0000314"/>
    <property type="project" value="WormBase"/>
</dbReference>
<dbReference type="GO" id="GO:0008021">
    <property type="term" value="C:synaptic vesicle"/>
    <property type="evidence" value="ECO:0000314"/>
    <property type="project" value="WormBase"/>
</dbReference>
<dbReference type="GO" id="GO:0035615">
    <property type="term" value="F:clathrin adaptor activity"/>
    <property type="evidence" value="ECO:0000318"/>
    <property type="project" value="GO_Central"/>
</dbReference>
<dbReference type="GO" id="GO:0010171">
    <property type="term" value="P:body morphogenesis"/>
    <property type="evidence" value="ECO:0000315"/>
    <property type="project" value="WormBase"/>
</dbReference>
<dbReference type="GO" id="GO:0072583">
    <property type="term" value="P:clathrin-dependent endocytosis"/>
    <property type="evidence" value="ECO:0000315"/>
    <property type="project" value="WormBase"/>
</dbReference>
<dbReference type="GO" id="GO:0006886">
    <property type="term" value="P:intracellular protein transport"/>
    <property type="evidence" value="ECO:0007669"/>
    <property type="project" value="InterPro"/>
</dbReference>
<dbReference type="GO" id="GO:0070266">
    <property type="term" value="P:necroptotic process"/>
    <property type="evidence" value="ECO:0000316"/>
    <property type="project" value="WormBase"/>
</dbReference>
<dbReference type="GO" id="GO:0061357">
    <property type="term" value="P:positive regulation of Wnt protein secretion"/>
    <property type="evidence" value="ECO:0000315"/>
    <property type="project" value="WormBase"/>
</dbReference>
<dbReference type="GO" id="GO:0097499">
    <property type="term" value="P:protein localization to non-motile cilium"/>
    <property type="evidence" value="ECO:0000315"/>
    <property type="project" value="UniProtKB"/>
</dbReference>
<dbReference type="GO" id="GO:0006898">
    <property type="term" value="P:receptor-mediated endocytosis"/>
    <property type="evidence" value="ECO:0000315"/>
    <property type="project" value="WormBase"/>
</dbReference>
<dbReference type="GO" id="GO:0050767">
    <property type="term" value="P:regulation of neurogenesis"/>
    <property type="evidence" value="ECO:0000315"/>
    <property type="project" value="UniProtKB"/>
</dbReference>
<dbReference type="CDD" id="cd09251">
    <property type="entry name" value="AP-2_Mu2_Cterm"/>
    <property type="match status" value="1"/>
</dbReference>
<dbReference type="CDD" id="cd14836">
    <property type="entry name" value="AP2_Mu_N"/>
    <property type="match status" value="1"/>
</dbReference>
<dbReference type="FunFam" id="3.30.450.60:FF:000002">
    <property type="entry name" value="AP-2 complex subunit mu, putative"/>
    <property type="match status" value="1"/>
</dbReference>
<dbReference type="FunFam" id="2.60.40.1170:FF:000003">
    <property type="entry name" value="Putative AP-2 complex subunit mu"/>
    <property type="match status" value="1"/>
</dbReference>
<dbReference type="Gene3D" id="3.30.450.60">
    <property type="match status" value="1"/>
</dbReference>
<dbReference type="Gene3D" id="2.60.40.1170">
    <property type="entry name" value="Mu homology domain, subdomain B"/>
    <property type="match status" value="2"/>
</dbReference>
<dbReference type="InterPro" id="IPR050431">
    <property type="entry name" value="Adaptor_comp_med_subunit"/>
</dbReference>
<dbReference type="InterPro" id="IPR036168">
    <property type="entry name" value="AP2_Mu_C_sf"/>
</dbReference>
<dbReference type="InterPro" id="IPR043532">
    <property type="entry name" value="AP2_Mu_N"/>
</dbReference>
<dbReference type="InterPro" id="IPR022775">
    <property type="entry name" value="AP_mu_sigma_su"/>
</dbReference>
<dbReference type="InterPro" id="IPR001392">
    <property type="entry name" value="Clathrin_mu"/>
</dbReference>
<dbReference type="InterPro" id="IPR018240">
    <property type="entry name" value="Clathrin_mu_CS"/>
</dbReference>
<dbReference type="InterPro" id="IPR011012">
    <property type="entry name" value="Longin-like_dom_sf"/>
</dbReference>
<dbReference type="InterPro" id="IPR028565">
    <property type="entry name" value="MHD"/>
</dbReference>
<dbReference type="InterPro" id="IPR043512">
    <property type="entry name" value="Mu2_C"/>
</dbReference>
<dbReference type="PANTHER" id="PTHR10529">
    <property type="entry name" value="AP COMPLEX SUBUNIT MU"/>
    <property type="match status" value="1"/>
</dbReference>
<dbReference type="Pfam" id="PF00928">
    <property type="entry name" value="Adap_comp_sub"/>
    <property type="match status" value="1"/>
</dbReference>
<dbReference type="Pfam" id="PF01217">
    <property type="entry name" value="Clat_adaptor_s"/>
    <property type="match status" value="1"/>
</dbReference>
<dbReference type="PIRSF" id="PIRSF005992">
    <property type="entry name" value="Clathrin_mu"/>
    <property type="match status" value="1"/>
</dbReference>
<dbReference type="PRINTS" id="PR00314">
    <property type="entry name" value="CLATHRINADPT"/>
</dbReference>
<dbReference type="SUPFAM" id="SSF49447">
    <property type="entry name" value="Second domain of Mu2 adaptin subunit (ap50) of ap2 adaptor"/>
    <property type="match status" value="1"/>
</dbReference>
<dbReference type="SUPFAM" id="SSF64356">
    <property type="entry name" value="SNARE-like"/>
    <property type="match status" value="1"/>
</dbReference>
<dbReference type="PROSITE" id="PS00990">
    <property type="entry name" value="CLAT_ADAPTOR_M_1"/>
    <property type="match status" value="1"/>
</dbReference>
<dbReference type="PROSITE" id="PS00991">
    <property type="entry name" value="CLAT_ADAPTOR_M_2"/>
    <property type="match status" value="1"/>
</dbReference>
<dbReference type="PROSITE" id="PS51072">
    <property type="entry name" value="MHD"/>
    <property type="match status" value="1"/>
</dbReference>
<proteinExistence type="evidence at transcript level"/>
<accession>P35603</accession>
<accession>Q8MXF2</accession>
<accession>Q9TZC9</accession>
<keyword id="KW-0025">Alternative splicing</keyword>
<keyword id="KW-1003">Cell membrane</keyword>
<keyword id="KW-0168">Coated pit</keyword>
<keyword id="KW-0254">Endocytosis</keyword>
<keyword id="KW-0472">Membrane</keyword>
<keyword id="KW-0653">Protein transport</keyword>
<keyword id="KW-1185">Reference proteome</keyword>
<keyword id="KW-0813">Transport</keyword>
<protein>
    <recommendedName>
        <fullName>AP-2 complex subunit mu</fullName>
    </recommendedName>
    <alternativeName>
        <fullName>Clathrin assembly protein complex 2 mu medium chain</fullName>
    </alternativeName>
    <alternativeName>
        <fullName>Clathrin coat assembly protein AP50</fullName>
    </alternativeName>
    <alternativeName>
        <fullName>Clathrin coat-associated protein AP50</fullName>
    </alternativeName>
    <alternativeName>
        <fullName>Mu2-adaptin</fullName>
    </alternativeName>
    <alternativeName>
        <fullName>Plasma membrane adaptor AP-2 50 kDa protein</fullName>
    </alternativeName>
    <alternativeName>
        <fullName>Protein dumpy-23</fullName>
    </alternativeName>
</protein>
<reference key="1">
    <citation type="journal article" date="1994" name="Genes Dev.">
        <title>unc-101, a gene required for many aspects of Caenorhabditis elegans development and behavior, encodes a clathrin-associated protein.</title>
        <authorList>
            <person name="Lee J."/>
            <person name="Jongeward G.D."/>
            <person name="Sternberg P.W."/>
        </authorList>
    </citation>
    <scope>NUCLEOTIDE SEQUENCE [MRNA] (ISOFORM A)</scope>
    <source>
        <strain>Bristol N2</strain>
    </source>
</reference>
<reference key="2">
    <citation type="journal article" date="1998" name="Science">
        <title>Genome sequence of the nematode C. elegans: a platform for investigating biology.</title>
        <authorList>
            <consortium name="The C. elegans sequencing consortium"/>
        </authorList>
    </citation>
    <scope>NUCLEOTIDE SEQUENCE [LARGE SCALE GENOMIC DNA]</scope>
    <scope>ALTERNATIVE SPLICING</scope>
    <source>
        <strain>Bristol N2</strain>
    </source>
</reference>
<reference key="3">
    <citation type="journal article" date="2008" name="Dev. Cell">
        <title>C. elegans AP-2 and retromer control Wnt signaling by regulating mig-14/Wntless.</title>
        <authorList>
            <person name="Pan C.L."/>
            <person name="Baum P.D."/>
            <person name="Gu M."/>
            <person name="Jorgensen E.M."/>
            <person name="Clark S.G."/>
            <person name="Garriga G."/>
        </authorList>
    </citation>
    <scope>FUNCTION</scope>
    <scope>DISRUPTION PHENOTYPE</scope>
</reference>
<reference key="4">
    <citation type="journal article" date="2008" name="Dev. Cell">
        <title>Wnt signaling requires retromer-dependent recycling of MIG-14/Wntless in Wnt-producing cells.</title>
        <authorList>
            <person name="Yang P.T."/>
            <person name="Lorenowicz M.J."/>
            <person name="Silhankova M."/>
            <person name="Coudreuse D.Y."/>
            <person name="Betist M.C."/>
            <person name="Korswagen H.C."/>
        </authorList>
    </citation>
    <scope>FUNCTION</scope>
    <scope>DISRUPTION PHENOTYPE</scope>
</reference>
<reference key="5">
    <citation type="journal article" date="2019" name="Elife">
        <title>The Caenorhabditis elegans Tubby homolog dynamically modulates olfactory cilia membrane morphogenesis and phospholipid composition.</title>
        <authorList>
            <person name="DiTirro D."/>
            <person name="Philbrook A."/>
            <person name="Rubino K."/>
            <person name="Sengupta P."/>
        </authorList>
    </citation>
    <scope>FUNCTION</scope>
    <scope>DISRUPTION PHENOTYPE</scope>
</reference>
<organism>
    <name type="scientific">Caenorhabditis elegans</name>
    <dbReference type="NCBI Taxonomy" id="6239"/>
    <lineage>
        <taxon>Eukaryota</taxon>
        <taxon>Metazoa</taxon>
        <taxon>Ecdysozoa</taxon>
        <taxon>Nematoda</taxon>
        <taxon>Chromadorea</taxon>
        <taxon>Rhabditida</taxon>
        <taxon>Rhabditina</taxon>
        <taxon>Rhabditomorpha</taxon>
        <taxon>Rhabditoidea</taxon>
        <taxon>Rhabditidae</taxon>
        <taxon>Peloderinae</taxon>
        <taxon>Caenorhabditis</taxon>
    </lineage>
</organism>
<comment type="function">
    <text evidence="1 2 4 5 6">Component of the adapter complexes which link clathrin to receptors in coated vesicles (By similarity). Clathrin-associated protein complexes are believed to interact with the cytoplasmic tails of membrane proteins, leading to their selection and concentration (By similarity). AP50 is a subunit of the plasma membrane adapter (By similarity). Essential wnt/egl-20 signaling protein that functions in wnt/egl-20-producing cells (PubMed:18160346, PubMed:18160347). Required for the AP-2 complex-mediated endocytosis of membrane proteins including wntless homolog mig-14 in egl-20-producing cells (PubMed:18160346, PubMed:18160347). During development, regulates the migration of HSN neurons and the left and right Q neuroblasts (QL and QR, respectively) and their descendants, possibly through hox gene and wnt/egl-20 gene target mab-5, and plays a role in establishing ALM and PLM neuronal cell polarity (PubMed:18160346). Regulates AWB sensory neuron cilia membrane expansion during development, potentially via localization of tub-1 and PtdIns(4,5)P2 to the ciliary base (PubMed:31259686). Required for the asymmetric divisions of V5 cells (PubMed:18160346).</text>
</comment>
<comment type="subunit">
    <text>Adapter protein complex 2 (AP-2) is a heterotetramer composed of two large adaptins (alpha-type subunit and beta-type subunits), a medium adaptin (mu-type subunit AP50) and a small adaptin (sigma-type subunit AP17).</text>
</comment>
<comment type="subcellular location">
    <subcellularLocation>
        <location>Cell membrane</location>
    </subcellularLocation>
    <subcellularLocation>
        <location>Membrane</location>
        <location>Coated pit</location>
        <topology>Peripheral membrane protein</topology>
        <orientation>Cytoplasmic side</orientation>
    </subcellularLocation>
    <text>Component of the coat surrounding the cytoplasmic face of coated vesicles in the plasma membrane.</text>
</comment>
<comment type="alternative products">
    <event type="alternative splicing"/>
    <isoform>
        <id>P35603-1</id>
        <name>a</name>
        <sequence type="displayed"/>
    </isoform>
    <isoform>
        <id>P35603-2</id>
        <name>b</name>
        <sequence type="described" ref="VSP_008037"/>
    </isoform>
</comment>
<comment type="tissue specificity">
    <text>Brain, heart, lung, liver, testis and spleen.</text>
</comment>
<comment type="disruption phenotype">
    <text evidence="4 5 6">Mutants display a squat body statue referred to as a dumpy phenotype and have defective HSN neuronal cell migration (PubMed:18160346). AWB sensory neurons show an expanded ciliary membrane phenotype with enhanced wing cilia and relocalized tub-1 and PtdIns(4,5)P2 to the ciliary base (PubMed:31259686). RNAi-mediated knockdown results in impaired function of the AP-2 complex and accumulation of the wntless homolog mig-14 at the cell membrane (PubMed:18160347).</text>
</comment>
<comment type="similarity">
    <text evidence="7">Belongs to the adapter complexes medium subunit family.</text>
</comment>
<evidence type="ECO:0000250" key="1">
    <source>
        <dbReference type="UniProtKB" id="Q09718"/>
    </source>
</evidence>
<evidence type="ECO:0000250" key="2">
    <source>
        <dbReference type="UniProtKB" id="Q99186"/>
    </source>
</evidence>
<evidence type="ECO:0000255" key="3">
    <source>
        <dbReference type="PROSITE-ProRule" id="PRU00404"/>
    </source>
</evidence>
<evidence type="ECO:0000269" key="4">
    <source>
    </source>
</evidence>
<evidence type="ECO:0000269" key="5">
    <source>
    </source>
</evidence>
<evidence type="ECO:0000269" key="6">
    <source>
    </source>
</evidence>
<evidence type="ECO:0000305" key="7"/>